<dbReference type="EMBL" id="AF233519">
    <property type="protein sequence ID" value="AAF82728.1"/>
    <property type="molecule type" value="mRNA"/>
</dbReference>
<dbReference type="SMR" id="Q9I8P5"/>
<dbReference type="GO" id="GO:0005576">
    <property type="term" value="C:extracellular region"/>
    <property type="evidence" value="ECO:0007669"/>
    <property type="project" value="UniProtKB-SubCell"/>
</dbReference>
<dbReference type="GO" id="GO:0001502">
    <property type="term" value="P:cartilage condensation"/>
    <property type="evidence" value="ECO:0007669"/>
    <property type="project" value="TreeGrafter"/>
</dbReference>
<dbReference type="Gene3D" id="2.30.30.40">
    <property type="entry name" value="SH3 Domains"/>
    <property type="match status" value="1"/>
</dbReference>
<dbReference type="InterPro" id="IPR042801">
    <property type="entry name" value="OTOR"/>
</dbReference>
<dbReference type="InterPro" id="IPR036028">
    <property type="entry name" value="SH3-like_dom_sf"/>
</dbReference>
<dbReference type="InterPro" id="IPR001452">
    <property type="entry name" value="SH3_domain"/>
</dbReference>
<dbReference type="PANTHER" id="PTHR47146">
    <property type="entry name" value="OTORAPLIN"/>
    <property type="match status" value="1"/>
</dbReference>
<dbReference type="PANTHER" id="PTHR47146:SF1">
    <property type="entry name" value="OTORAPLIN"/>
    <property type="match status" value="1"/>
</dbReference>
<dbReference type="Pfam" id="PF07653">
    <property type="entry name" value="SH3_2"/>
    <property type="match status" value="1"/>
</dbReference>
<dbReference type="SMART" id="SM00326">
    <property type="entry name" value="SH3"/>
    <property type="match status" value="1"/>
</dbReference>
<dbReference type="SUPFAM" id="SSF50044">
    <property type="entry name" value="SH3-domain"/>
    <property type="match status" value="1"/>
</dbReference>
<dbReference type="PROSITE" id="PS50002">
    <property type="entry name" value="SH3"/>
    <property type="match status" value="1"/>
</dbReference>
<feature type="signal peptide" evidence="2">
    <location>
        <begin position="1"/>
        <end position="23"/>
    </location>
</feature>
<feature type="chain" id="PRO_0000019036" description="Otoraplin">
    <location>
        <begin position="24"/>
        <end position="133"/>
    </location>
</feature>
<feature type="domain" description="SH3" evidence="3">
    <location>
        <begin position="42"/>
        <end position="115"/>
    </location>
</feature>
<feature type="disulfide bond" evidence="1">
    <location>
        <begin position="35"/>
        <end position="40"/>
    </location>
</feature>
<feature type="disulfide bond" evidence="1">
    <location>
        <begin position="58"/>
        <end position="132"/>
    </location>
</feature>
<sequence length="133" mass="15243">MAKTFYVVVIVLCLGFIHQKAYGVYMQKLSDKKLCADDECIYAISFGRAEDDYNAPDCRFVNLKKGELVYIYTKLVKENDDAGEFWSGSVYSDQYRDQQGLVGYFPSSLVTELTVYKDELQELPTTAVDFYCD</sequence>
<comment type="subcellular location">
    <subcellularLocation>
        <location evidence="4">Secreted</location>
    </subcellularLocation>
</comment>
<comment type="similarity">
    <text evidence="4">Belongs to the MIA/OTOR family.</text>
</comment>
<evidence type="ECO:0000250" key="1"/>
<evidence type="ECO:0000255" key="2"/>
<evidence type="ECO:0000255" key="3">
    <source>
        <dbReference type="PROSITE-ProRule" id="PRU00192"/>
    </source>
</evidence>
<evidence type="ECO:0000305" key="4"/>
<keyword id="KW-1015">Disulfide bond</keyword>
<keyword id="KW-0964">Secreted</keyword>
<keyword id="KW-0728">SH3 domain</keyword>
<keyword id="KW-0732">Signal</keyword>
<name>OTOR_AQUCT</name>
<accession>Q9I8P5</accession>
<gene>
    <name type="primary">OTOR</name>
</gene>
<proteinExistence type="evidence at transcript level"/>
<protein>
    <recommendedName>
        <fullName>Otoraplin</fullName>
    </recommendedName>
</protein>
<reference key="1">
    <citation type="journal article" date="2000" name="Genomics">
        <title>A novel conserved cochlear gene, OTOR: identification, expression analysis, and chromosomal mapping.</title>
        <authorList>
            <person name="Robertson N.G."/>
            <person name="Heller S."/>
            <person name="Lin J.S."/>
            <person name="Resendes B.L."/>
            <person name="Weremowicz S."/>
            <person name="Denis C.S."/>
            <person name="Bell A.M."/>
            <person name="Hudspeth A.J."/>
            <person name="Morton C.C."/>
        </authorList>
    </citation>
    <scope>NUCLEOTIDE SEQUENCE [MRNA]</scope>
</reference>
<organism>
    <name type="scientific">Aquarana catesbeiana</name>
    <name type="common">American bullfrog</name>
    <name type="synonym">Rana catesbeiana</name>
    <dbReference type="NCBI Taxonomy" id="8400"/>
    <lineage>
        <taxon>Eukaryota</taxon>
        <taxon>Metazoa</taxon>
        <taxon>Chordata</taxon>
        <taxon>Craniata</taxon>
        <taxon>Vertebrata</taxon>
        <taxon>Euteleostomi</taxon>
        <taxon>Amphibia</taxon>
        <taxon>Batrachia</taxon>
        <taxon>Anura</taxon>
        <taxon>Neobatrachia</taxon>
        <taxon>Ranoidea</taxon>
        <taxon>Ranidae</taxon>
        <taxon>Aquarana</taxon>
    </lineage>
</organism>